<organism>
    <name type="scientific">Nitrobacter winogradskyi (strain ATCC 25391 / DSM 10237 / CIP 104748 / NCIMB 11846 / Nb-255)</name>
    <dbReference type="NCBI Taxonomy" id="323098"/>
    <lineage>
        <taxon>Bacteria</taxon>
        <taxon>Pseudomonadati</taxon>
        <taxon>Pseudomonadota</taxon>
        <taxon>Alphaproteobacteria</taxon>
        <taxon>Hyphomicrobiales</taxon>
        <taxon>Nitrobacteraceae</taxon>
        <taxon>Nitrobacter</taxon>
    </lineage>
</organism>
<reference key="1">
    <citation type="journal article" date="2006" name="Appl. Environ. Microbiol.">
        <title>Genome sequence of the chemolithoautotrophic nitrite-oxidizing bacterium Nitrobacter winogradskyi Nb-255.</title>
        <authorList>
            <person name="Starkenburg S.R."/>
            <person name="Chain P.S.G."/>
            <person name="Sayavedra-Soto L.A."/>
            <person name="Hauser L."/>
            <person name="Land M.L."/>
            <person name="Larimer F.W."/>
            <person name="Malfatti S.A."/>
            <person name="Klotz M.G."/>
            <person name="Bottomley P.J."/>
            <person name="Arp D.J."/>
            <person name="Hickey W.J."/>
        </authorList>
    </citation>
    <scope>NUCLEOTIDE SEQUENCE [LARGE SCALE GENOMIC DNA]</scope>
    <source>
        <strain>ATCC 25391 / DSM 10237 / CIP 104748 / NCIMB 11846 / Nb-255</strain>
    </source>
</reference>
<protein>
    <recommendedName>
        <fullName evidence="1">1-(5-phosphoribosyl)-5-[(5-phosphoribosylamino)methylideneamino] imidazole-4-carboxamide isomerase</fullName>
        <ecNumber evidence="1">5.3.1.16</ecNumber>
    </recommendedName>
    <alternativeName>
        <fullName evidence="1">Phosphoribosylformimino-5-aminoimidazole carboxamide ribotide isomerase</fullName>
    </alternativeName>
</protein>
<accession>Q3SWF0</accession>
<comment type="catalytic activity">
    <reaction evidence="1">
        <text>1-(5-phospho-beta-D-ribosyl)-5-[(5-phospho-beta-D-ribosylamino)methylideneamino]imidazole-4-carboxamide = 5-[(5-phospho-1-deoxy-D-ribulos-1-ylimino)methylamino]-1-(5-phospho-beta-D-ribosyl)imidazole-4-carboxamide</text>
        <dbReference type="Rhea" id="RHEA:15469"/>
        <dbReference type="ChEBI" id="CHEBI:58435"/>
        <dbReference type="ChEBI" id="CHEBI:58525"/>
        <dbReference type="EC" id="5.3.1.16"/>
    </reaction>
</comment>
<comment type="pathway">
    <text evidence="1">Amino-acid biosynthesis; L-histidine biosynthesis; L-histidine from 5-phospho-alpha-D-ribose 1-diphosphate: step 4/9.</text>
</comment>
<comment type="subcellular location">
    <subcellularLocation>
        <location evidence="1">Cytoplasm</location>
    </subcellularLocation>
</comment>
<comment type="similarity">
    <text evidence="1">Belongs to the HisA/HisF family.</text>
</comment>
<name>HIS4_NITWN</name>
<proteinExistence type="inferred from homology"/>
<feature type="chain" id="PRO_0000229063" description="1-(5-phosphoribosyl)-5-[(5-phosphoribosylamino)methylideneamino] imidazole-4-carboxamide isomerase">
    <location>
        <begin position="1"/>
        <end position="249"/>
    </location>
</feature>
<feature type="active site" description="Proton acceptor" evidence="1">
    <location>
        <position position="11"/>
    </location>
</feature>
<feature type="active site" description="Proton donor" evidence="1">
    <location>
        <position position="132"/>
    </location>
</feature>
<evidence type="ECO:0000255" key="1">
    <source>
        <dbReference type="HAMAP-Rule" id="MF_01014"/>
    </source>
</evidence>
<sequence length="249" mass="26115">METVILFPAIDLKSGQCVRLEQGDMARATVFNLDPVEQARAFAAQGFEYLHVVDLDGAFAGKPVNADAVERVLRNVALPMQLGGGIRDLKTVEAWLGKGVARVIIGTAAVRDPVLVREAAKAFPGRVAVGLDARDGKVAVEGWAETSEVTALDIARRFEDAGIAAIIFTDIARDGLLKGLNLDATIALADSISIPVIASGGFASIADVKALLEPRAKKLAGAISGRALYDGRLDPVEALKLIHAARAAA</sequence>
<gene>
    <name evidence="1" type="primary">hisA</name>
    <name type="ordered locus">Nwi_0123</name>
</gene>
<dbReference type="EC" id="5.3.1.16" evidence="1"/>
<dbReference type="EMBL" id="CP000115">
    <property type="protein sequence ID" value="ABA03391.1"/>
    <property type="molecule type" value="Genomic_DNA"/>
</dbReference>
<dbReference type="RefSeq" id="WP_187148000.1">
    <property type="nucleotide sequence ID" value="NC_007406.1"/>
</dbReference>
<dbReference type="SMR" id="Q3SWF0"/>
<dbReference type="STRING" id="323098.Nwi_0123"/>
<dbReference type="KEGG" id="nwi:Nwi_0123"/>
<dbReference type="eggNOG" id="COG0106">
    <property type="taxonomic scope" value="Bacteria"/>
</dbReference>
<dbReference type="HOGENOM" id="CLU_048577_1_1_5"/>
<dbReference type="UniPathway" id="UPA00031">
    <property type="reaction ID" value="UER00009"/>
</dbReference>
<dbReference type="Proteomes" id="UP000002531">
    <property type="component" value="Chromosome"/>
</dbReference>
<dbReference type="GO" id="GO:0005737">
    <property type="term" value="C:cytoplasm"/>
    <property type="evidence" value="ECO:0007669"/>
    <property type="project" value="UniProtKB-SubCell"/>
</dbReference>
<dbReference type="GO" id="GO:0003949">
    <property type="term" value="F:1-(5-phosphoribosyl)-5-[(5-phosphoribosylamino)methylideneamino]imidazole-4-carboxamide isomerase activity"/>
    <property type="evidence" value="ECO:0007669"/>
    <property type="project" value="UniProtKB-UniRule"/>
</dbReference>
<dbReference type="GO" id="GO:0000105">
    <property type="term" value="P:L-histidine biosynthetic process"/>
    <property type="evidence" value="ECO:0007669"/>
    <property type="project" value="UniProtKB-UniRule"/>
</dbReference>
<dbReference type="GO" id="GO:0000162">
    <property type="term" value="P:L-tryptophan biosynthetic process"/>
    <property type="evidence" value="ECO:0007669"/>
    <property type="project" value="TreeGrafter"/>
</dbReference>
<dbReference type="CDD" id="cd04732">
    <property type="entry name" value="HisA"/>
    <property type="match status" value="1"/>
</dbReference>
<dbReference type="FunFam" id="3.20.20.70:FF:000009">
    <property type="entry name" value="1-(5-phosphoribosyl)-5-[(5-phosphoribosylamino)methylideneamino] imidazole-4-carboxamide isomerase"/>
    <property type="match status" value="1"/>
</dbReference>
<dbReference type="Gene3D" id="3.20.20.70">
    <property type="entry name" value="Aldolase class I"/>
    <property type="match status" value="1"/>
</dbReference>
<dbReference type="HAMAP" id="MF_01014">
    <property type="entry name" value="HisA"/>
    <property type="match status" value="1"/>
</dbReference>
<dbReference type="InterPro" id="IPR013785">
    <property type="entry name" value="Aldolase_TIM"/>
</dbReference>
<dbReference type="InterPro" id="IPR006062">
    <property type="entry name" value="His_biosynth"/>
</dbReference>
<dbReference type="InterPro" id="IPR006063">
    <property type="entry name" value="HisA_bact_arch"/>
</dbReference>
<dbReference type="InterPro" id="IPR044524">
    <property type="entry name" value="Isoase_HisA-like"/>
</dbReference>
<dbReference type="InterPro" id="IPR023016">
    <property type="entry name" value="Isoase_HisA-like_bact"/>
</dbReference>
<dbReference type="InterPro" id="IPR011060">
    <property type="entry name" value="RibuloseP-bd_barrel"/>
</dbReference>
<dbReference type="NCBIfam" id="TIGR00007">
    <property type="entry name" value="1-(5-phosphoribosyl)-5-[(5-phosphoribosylamino)methylideneamino]imidazole-4-carboxamide isomerase"/>
    <property type="match status" value="1"/>
</dbReference>
<dbReference type="PANTHER" id="PTHR43090">
    <property type="entry name" value="1-(5-PHOSPHORIBOSYL)-5-[(5-PHOSPHORIBOSYLAMINO)METHYLIDENEAMINO] IMIDAZOLE-4-CARBOXAMIDE ISOMERASE"/>
    <property type="match status" value="1"/>
</dbReference>
<dbReference type="PANTHER" id="PTHR43090:SF2">
    <property type="entry name" value="1-(5-PHOSPHORIBOSYL)-5-[(5-PHOSPHORIBOSYLAMINO)METHYLIDENEAMINO] IMIDAZOLE-4-CARBOXAMIDE ISOMERASE"/>
    <property type="match status" value="1"/>
</dbReference>
<dbReference type="Pfam" id="PF00977">
    <property type="entry name" value="His_biosynth"/>
    <property type="match status" value="1"/>
</dbReference>
<dbReference type="SUPFAM" id="SSF51366">
    <property type="entry name" value="Ribulose-phoshate binding barrel"/>
    <property type="match status" value="1"/>
</dbReference>
<keyword id="KW-0028">Amino-acid biosynthesis</keyword>
<keyword id="KW-0963">Cytoplasm</keyword>
<keyword id="KW-0368">Histidine biosynthesis</keyword>
<keyword id="KW-0413">Isomerase</keyword>
<keyword id="KW-1185">Reference proteome</keyword>